<reference key="1">
    <citation type="journal article" date="2008" name="J. Bacteriol.">
        <title>Genome sequence of the chemolithoautotrophic bacterium Oligotropha carboxidovorans OM5T.</title>
        <authorList>
            <person name="Paul D."/>
            <person name="Bridges S."/>
            <person name="Burgess S.C."/>
            <person name="Dandass Y."/>
            <person name="Lawrence M.L."/>
        </authorList>
    </citation>
    <scope>NUCLEOTIDE SEQUENCE [LARGE SCALE GENOMIC DNA]</scope>
    <source>
        <strain>ATCC 49405 / DSM 1227 / KCTC 32145 / OM5</strain>
    </source>
</reference>
<reference key="2">
    <citation type="journal article" date="2011" name="J. Bacteriol.">
        <title>Complete genome sequences of the chemolithoautotrophic Oligotropha carboxidovorans strains OM4 and OM5.</title>
        <authorList>
            <person name="Volland S."/>
            <person name="Rachinger M."/>
            <person name="Strittmatter A."/>
            <person name="Daniel R."/>
            <person name="Gottschalk G."/>
            <person name="Meyer O."/>
        </authorList>
    </citation>
    <scope>NUCLEOTIDE SEQUENCE [LARGE SCALE GENOMIC DNA]</scope>
    <source>
        <strain>ATCC 49405 / DSM 1227 / KCTC 32145 / OM5</strain>
    </source>
</reference>
<feature type="signal peptide" evidence="1">
    <location>
        <begin position="1"/>
        <end position="25"/>
    </location>
</feature>
<feature type="chain" id="PRO_1000123953" description="Flagellar L-ring protein">
    <location>
        <begin position="26"/>
        <end position="249"/>
    </location>
</feature>
<feature type="lipid moiety-binding region" description="N-palmitoyl cysteine" evidence="1">
    <location>
        <position position="26"/>
    </location>
</feature>
<feature type="lipid moiety-binding region" description="S-diacylglycerol cysteine" evidence="1">
    <location>
        <position position="26"/>
    </location>
</feature>
<evidence type="ECO:0000255" key="1">
    <source>
        <dbReference type="HAMAP-Rule" id="MF_00415"/>
    </source>
</evidence>
<dbReference type="EMBL" id="CP001196">
    <property type="protein sequence ID" value="ACI92516.1"/>
    <property type="molecule type" value="Genomic_DNA"/>
</dbReference>
<dbReference type="EMBL" id="CP002826">
    <property type="protein sequence ID" value="AEI07289.1"/>
    <property type="molecule type" value="Genomic_DNA"/>
</dbReference>
<dbReference type="RefSeq" id="WP_012562545.1">
    <property type="nucleotide sequence ID" value="NC_015684.1"/>
</dbReference>
<dbReference type="STRING" id="504832.OCA5_c25940"/>
<dbReference type="KEGG" id="oca:OCAR_5384"/>
<dbReference type="KEGG" id="ocg:OCA5_c25940"/>
<dbReference type="PATRIC" id="fig|504832.7.peg.2742"/>
<dbReference type="eggNOG" id="COG2063">
    <property type="taxonomic scope" value="Bacteria"/>
</dbReference>
<dbReference type="HOGENOM" id="CLU_069313_1_2_5"/>
<dbReference type="OrthoDB" id="9789227at2"/>
<dbReference type="Proteomes" id="UP000007730">
    <property type="component" value="Chromosome"/>
</dbReference>
<dbReference type="GO" id="GO:0009427">
    <property type="term" value="C:bacterial-type flagellum basal body, distal rod, L ring"/>
    <property type="evidence" value="ECO:0007669"/>
    <property type="project" value="InterPro"/>
</dbReference>
<dbReference type="GO" id="GO:0009279">
    <property type="term" value="C:cell outer membrane"/>
    <property type="evidence" value="ECO:0007669"/>
    <property type="project" value="UniProtKB-SubCell"/>
</dbReference>
<dbReference type="GO" id="GO:0003774">
    <property type="term" value="F:cytoskeletal motor activity"/>
    <property type="evidence" value="ECO:0007669"/>
    <property type="project" value="InterPro"/>
</dbReference>
<dbReference type="GO" id="GO:0071973">
    <property type="term" value="P:bacterial-type flagellum-dependent cell motility"/>
    <property type="evidence" value="ECO:0007669"/>
    <property type="project" value="InterPro"/>
</dbReference>
<dbReference type="HAMAP" id="MF_00415">
    <property type="entry name" value="FlgH"/>
    <property type="match status" value="1"/>
</dbReference>
<dbReference type="InterPro" id="IPR000527">
    <property type="entry name" value="Flag_Lring"/>
</dbReference>
<dbReference type="NCBIfam" id="NF001305">
    <property type="entry name" value="PRK00249.1-5"/>
    <property type="match status" value="1"/>
</dbReference>
<dbReference type="PANTHER" id="PTHR34933">
    <property type="entry name" value="FLAGELLAR L-RING PROTEIN"/>
    <property type="match status" value="1"/>
</dbReference>
<dbReference type="PANTHER" id="PTHR34933:SF1">
    <property type="entry name" value="FLAGELLAR L-RING PROTEIN"/>
    <property type="match status" value="1"/>
</dbReference>
<dbReference type="Pfam" id="PF02107">
    <property type="entry name" value="FlgH"/>
    <property type="match status" value="1"/>
</dbReference>
<dbReference type="PRINTS" id="PR01008">
    <property type="entry name" value="FLGLRINGFLGH"/>
</dbReference>
<dbReference type="PROSITE" id="PS51257">
    <property type="entry name" value="PROKAR_LIPOPROTEIN"/>
    <property type="match status" value="1"/>
</dbReference>
<proteinExistence type="inferred from homology"/>
<name>FLGH_AFIC5</name>
<sequence>MSRLRTSHALRTAAALVAVGCLASGCSSIERLSQIGEQPKLTAIDNPTTKAGYKPVSMPMPTPQPASYNPNSLWRNGSRAFFKDQRAHQVGDILTVIVNITDKANIANETQRSRANTEDSSITNFFGIKKVPGTNGAGNMLTTGSVASSDGKGSVVRQEALQTNVAAVVTQLLPNGNLVVEGKQEIRVNFEMRELVVAGIVRPEDIQSDNTIDSSKIAQARIAYGGRGQITDVQQPRYGQQVMDILLPF</sequence>
<organism>
    <name type="scientific">Afipia carboxidovorans (strain ATCC 49405 / DSM 1227 / KCTC 32145 / OM5)</name>
    <name type="common">Oligotropha carboxidovorans</name>
    <dbReference type="NCBI Taxonomy" id="504832"/>
    <lineage>
        <taxon>Bacteria</taxon>
        <taxon>Pseudomonadati</taxon>
        <taxon>Pseudomonadota</taxon>
        <taxon>Alphaproteobacteria</taxon>
        <taxon>Hyphomicrobiales</taxon>
        <taxon>Nitrobacteraceae</taxon>
        <taxon>Afipia</taxon>
    </lineage>
</organism>
<protein>
    <recommendedName>
        <fullName evidence="1">Flagellar L-ring protein</fullName>
    </recommendedName>
    <alternativeName>
        <fullName evidence="1">Basal body L-ring protein</fullName>
    </alternativeName>
</protein>
<keyword id="KW-0975">Bacterial flagellum</keyword>
<keyword id="KW-0998">Cell outer membrane</keyword>
<keyword id="KW-0449">Lipoprotein</keyword>
<keyword id="KW-0472">Membrane</keyword>
<keyword id="KW-0564">Palmitate</keyword>
<keyword id="KW-1185">Reference proteome</keyword>
<keyword id="KW-0732">Signal</keyword>
<accession>B6JBH5</accession>
<accession>F8BTT5</accession>
<gene>
    <name evidence="1" type="primary">flgH</name>
    <name type="ordered locus">OCAR_5384</name>
    <name type="ordered locus">OCA5_c25940</name>
</gene>
<comment type="function">
    <text evidence="1">Assembles around the rod to form the L-ring and probably protects the motor/basal body from shearing forces during rotation.</text>
</comment>
<comment type="subunit">
    <text evidence="1">The basal body constitutes a major portion of the flagellar organelle and consists of four rings (L,P,S, and M) mounted on a central rod.</text>
</comment>
<comment type="subcellular location">
    <subcellularLocation>
        <location evidence="1">Cell outer membrane</location>
        <topology evidence="1">Lipid-anchor</topology>
    </subcellularLocation>
    <subcellularLocation>
        <location evidence="1">Bacterial flagellum basal body</location>
    </subcellularLocation>
</comment>
<comment type="similarity">
    <text evidence="1">Belongs to the FlgH family.</text>
</comment>